<comment type="function">
    <text evidence="1">Palmitoyltransferase specific for casein kinase 1.</text>
</comment>
<comment type="catalytic activity">
    <reaction>
        <text>L-cysteinyl-[protein] + hexadecanoyl-CoA = S-hexadecanoyl-L-cysteinyl-[protein] + CoA</text>
        <dbReference type="Rhea" id="RHEA:36683"/>
        <dbReference type="Rhea" id="RHEA-COMP:10131"/>
        <dbReference type="Rhea" id="RHEA-COMP:11032"/>
        <dbReference type="ChEBI" id="CHEBI:29950"/>
        <dbReference type="ChEBI" id="CHEBI:57287"/>
        <dbReference type="ChEBI" id="CHEBI:57379"/>
        <dbReference type="ChEBI" id="CHEBI:74151"/>
        <dbReference type="EC" id="2.3.1.225"/>
    </reaction>
</comment>
<comment type="subcellular location">
    <subcellularLocation>
        <location>Early endosome membrane</location>
        <topology>Multi-pass membrane protein</topology>
    </subcellularLocation>
    <subcellularLocation>
        <location evidence="1">Golgi apparatus membrane</location>
        <topology evidence="1">Multi-pass membrane protein</topology>
    </subcellularLocation>
</comment>
<comment type="domain">
    <text evidence="1">The DHHC domain is required for palmitoyltransferase activity.</text>
</comment>
<comment type="similarity">
    <text evidence="5">Belongs to the DHHC palmitoyltransferase family. AKR/ZDHHC17 subfamily.</text>
</comment>
<evidence type="ECO:0000250" key="1"/>
<evidence type="ECO:0000255" key="2"/>
<evidence type="ECO:0000255" key="3">
    <source>
        <dbReference type="PROSITE-ProRule" id="PRU00067"/>
    </source>
</evidence>
<evidence type="ECO:0000256" key="4">
    <source>
        <dbReference type="SAM" id="MobiDB-lite"/>
    </source>
</evidence>
<evidence type="ECO:0000305" key="5"/>
<reference key="1">
    <citation type="journal article" date="2003" name="Nature">
        <title>Yeast genome duplication was followed by asynchronous differentiation of duplicated genes.</title>
        <authorList>
            <person name="Langkjaer R.B."/>
            <person name="Cliften P.F."/>
            <person name="Johnston M."/>
            <person name="Piskur J."/>
        </authorList>
    </citation>
    <scope>NUCLEOTIDE SEQUENCE [GENOMIC DNA]</scope>
    <source>
        <strain>ATCC 76492 / CBS 2359/152 / CLIB 210</strain>
    </source>
</reference>
<reference key="2">
    <citation type="journal article" date="2004" name="Nature">
        <title>Genome evolution in yeasts.</title>
        <authorList>
            <person name="Dujon B."/>
            <person name="Sherman D."/>
            <person name="Fischer G."/>
            <person name="Durrens P."/>
            <person name="Casaregola S."/>
            <person name="Lafontaine I."/>
            <person name="de Montigny J."/>
            <person name="Marck C."/>
            <person name="Neuveglise C."/>
            <person name="Talla E."/>
            <person name="Goffard N."/>
            <person name="Frangeul L."/>
            <person name="Aigle M."/>
            <person name="Anthouard V."/>
            <person name="Babour A."/>
            <person name="Barbe V."/>
            <person name="Barnay S."/>
            <person name="Blanchin S."/>
            <person name="Beckerich J.-M."/>
            <person name="Beyne E."/>
            <person name="Bleykasten C."/>
            <person name="Boisrame A."/>
            <person name="Boyer J."/>
            <person name="Cattolico L."/>
            <person name="Confanioleri F."/>
            <person name="de Daruvar A."/>
            <person name="Despons L."/>
            <person name="Fabre E."/>
            <person name="Fairhead C."/>
            <person name="Ferry-Dumazet H."/>
            <person name="Groppi A."/>
            <person name="Hantraye F."/>
            <person name="Hennequin C."/>
            <person name="Jauniaux N."/>
            <person name="Joyet P."/>
            <person name="Kachouri R."/>
            <person name="Kerrest A."/>
            <person name="Koszul R."/>
            <person name="Lemaire M."/>
            <person name="Lesur I."/>
            <person name="Ma L."/>
            <person name="Muller H."/>
            <person name="Nicaud J.-M."/>
            <person name="Nikolski M."/>
            <person name="Oztas S."/>
            <person name="Ozier-Kalogeropoulos O."/>
            <person name="Pellenz S."/>
            <person name="Potier S."/>
            <person name="Richard G.-F."/>
            <person name="Straub M.-L."/>
            <person name="Suleau A."/>
            <person name="Swennen D."/>
            <person name="Tekaia F."/>
            <person name="Wesolowski-Louvel M."/>
            <person name="Westhof E."/>
            <person name="Wirth B."/>
            <person name="Zeniou-Meyer M."/>
            <person name="Zivanovic Y."/>
            <person name="Bolotin-Fukuhara M."/>
            <person name="Thierry A."/>
            <person name="Bouchier C."/>
            <person name="Caudron B."/>
            <person name="Scarpelli C."/>
            <person name="Gaillardin C."/>
            <person name="Weissenbach J."/>
            <person name="Wincker P."/>
            <person name="Souciet J.-L."/>
        </authorList>
    </citation>
    <scope>NUCLEOTIDE SEQUENCE [LARGE SCALE GENOMIC DNA]</scope>
    <source>
        <strain>ATCC 8585 / CBS 2359 / DSM 70799 / NBRC 1267 / NRRL Y-1140 / WM37</strain>
    </source>
</reference>
<organism>
    <name type="scientific">Kluyveromyces lactis (strain ATCC 8585 / CBS 2359 / DSM 70799 / NBRC 1267 / NRRL Y-1140 / WM37)</name>
    <name type="common">Yeast</name>
    <name type="synonym">Candida sphaerica</name>
    <dbReference type="NCBI Taxonomy" id="284590"/>
    <lineage>
        <taxon>Eukaryota</taxon>
        <taxon>Fungi</taxon>
        <taxon>Dikarya</taxon>
        <taxon>Ascomycota</taxon>
        <taxon>Saccharomycotina</taxon>
        <taxon>Saccharomycetes</taxon>
        <taxon>Saccharomycetales</taxon>
        <taxon>Saccharomycetaceae</taxon>
        <taxon>Kluyveromyces</taxon>
    </lineage>
</organism>
<proteinExistence type="inferred from homology"/>
<protein>
    <recommendedName>
        <fullName>Palmitoyltransferase AKR1</fullName>
        <ecNumber>2.3.1.225</ecNumber>
    </recommendedName>
    <alternativeName>
        <fullName>Ankyrin repeat-containing protein AKR1</fullName>
    </alternativeName>
</protein>
<feature type="chain" id="PRO_0000212925" description="Palmitoyltransferase AKR1">
    <location>
        <begin position="1"/>
        <end position="752"/>
    </location>
</feature>
<feature type="topological domain" description="Cytoplasmic" evidence="2">
    <location>
        <begin position="1"/>
        <end position="318"/>
    </location>
</feature>
<feature type="transmembrane region" description="Helical" evidence="2">
    <location>
        <begin position="319"/>
        <end position="339"/>
    </location>
</feature>
<feature type="topological domain" description="Lumenal" evidence="2">
    <location>
        <begin position="340"/>
        <end position="341"/>
    </location>
</feature>
<feature type="transmembrane region" description="Helical" evidence="2">
    <location>
        <begin position="342"/>
        <end position="362"/>
    </location>
</feature>
<feature type="topological domain" description="Cytoplasmic" evidence="2">
    <location>
        <begin position="363"/>
        <end position="380"/>
    </location>
</feature>
<feature type="transmembrane region" description="Helical" evidence="2">
    <location>
        <begin position="381"/>
        <end position="401"/>
    </location>
</feature>
<feature type="topological domain" description="Lumenal" evidence="2">
    <location>
        <begin position="402"/>
        <end position="412"/>
    </location>
</feature>
<feature type="transmembrane region" description="Helical" evidence="2">
    <location>
        <begin position="413"/>
        <end position="433"/>
    </location>
</feature>
<feature type="topological domain" description="Cytoplasmic" evidence="2">
    <location>
        <begin position="434"/>
        <end position="509"/>
    </location>
</feature>
<feature type="transmembrane region" description="Helical" evidence="2">
    <location>
        <begin position="510"/>
        <end position="530"/>
    </location>
</feature>
<feature type="topological domain" description="Lumenal" evidence="2">
    <location>
        <begin position="531"/>
        <end position="567"/>
    </location>
</feature>
<feature type="transmembrane region" description="Helical" evidence="2">
    <location>
        <begin position="568"/>
        <end position="588"/>
    </location>
</feature>
<feature type="topological domain" description="Cytoplasmic" evidence="2">
    <location>
        <begin position="589"/>
        <end position="752"/>
    </location>
</feature>
<feature type="repeat" description="ANK 1">
    <location>
        <begin position="72"/>
        <end position="102"/>
    </location>
</feature>
<feature type="repeat" description="ANK 2">
    <location>
        <begin position="108"/>
        <end position="137"/>
    </location>
</feature>
<feature type="repeat" description="ANK 3">
    <location>
        <begin position="142"/>
        <end position="171"/>
    </location>
</feature>
<feature type="repeat" description="ANK 4">
    <location>
        <begin position="175"/>
        <end position="208"/>
    </location>
</feature>
<feature type="repeat" description="ANK 5">
    <location>
        <begin position="212"/>
        <end position="241"/>
    </location>
</feature>
<feature type="repeat" description="ANK 6">
    <location>
        <begin position="245"/>
        <end position="274"/>
    </location>
</feature>
<feature type="domain" description="DHHC" evidence="3">
    <location>
        <begin position="466"/>
        <end position="516"/>
    </location>
</feature>
<feature type="region of interest" description="Disordered" evidence="4">
    <location>
        <begin position="1"/>
        <end position="21"/>
    </location>
</feature>
<feature type="region of interest" description="Disordered" evidence="4">
    <location>
        <begin position="49"/>
        <end position="68"/>
    </location>
</feature>
<feature type="compositionally biased region" description="Basic and acidic residues" evidence="4">
    <location>
        <begin position="9"/>
        <end position="21"/>
    </location>
</feature>
<feature type="compositionally biased region" description="Basic and acidic residues" evidence="4">
    <location>
        <begin position="51"/>
        <end position="68"/>
    </location>
</feature>
<feature type="active site" description="S-palmitoyl cysteine intermediate" evidence="1">
    <location>
        <position position="496"/>
    </location>
</feature>
<dbReference type="EC" id="2.3.1.225"/>
<dbReference type="EMBL" id="AY145047">
    <property type="protein sequence ID" value="AAO32609.1"/>
    <property type="molecule type" value="Genomic_DNA"/>
</dbReference>
<dbReference type="EMBL" id="CR382125">
    <property type="protein sequence ID" value="CAG99790.1"/>
    <property type="molecule type" value="Genomic_DNA"/>
</dbReference>
<dbReference type="RefSeq" id="XP_454703.1">
    <property type="nucleotide sequence ID" value="XM_454703.1"/>
</dbReference>
<dbReference type="SMR" id="Q875M2"/>
<dbReference type="FunCoup" id="Q875M2">
    <property type="interactions" value="617"/>
</dbReference>
<dbReference type="STRING" id="284590.Q875M2"/>
<dbReference type="PaxDb" id="284590-Q875M2"/>
<dbReference type="KEGG" id="kla:KLLA0_E16721g"/>
<dbReference type="eggNOG" id="KOG0509">
    <property type="taxonomic scope" value="Eukaryota"/>
</dbReference>
<dbReference type="HOGENOM" id="CLU_012510_1_1_1"/>
<dbReference type="InParanoid" id="Q875M2"/>
<dbReference type="OMA" id="FWVGFRY"/>
<dbReference type="Proteomes" id="UP000000598">
    <property type="component" value="Chromosome E"/>
</dbReference>
<dbReference type="GO" id="GO:0031901">
    <property type="term" value="C:early endosome membrane"/>
    <property type="evidence" value="ECO:0007669"/>
    <property type="project" value="UniProtKB-SubCell"/>
</dbReference>
<dbReference type="GO" id="GO:0000139">
    <property type="term" value="C:Golgi membrane"/>
    <property type="evidence" value="ECO:0007669"/>
    <property type="project" value="UniProtKB-SubCell"/>
</dbReference>
<dbReference type="GO" id="GO:0019706">
    <property type="term" value="F:protein-cysteine S-palmitoyltransferase activity"/>
    <property type="evidence" value="ECO:0007669"/>
    <property type="project" value="UniProtKB-EC"/>
</dbReference>
<dbReference type="Gene3D" id="1.25.40.20">
    <property type="entry name" value="Ankyrin repeat-containing domain"/>
    <property type="match status" value="1"/>
</dbReference>
<dbReference type="InterPro" id="IPR002110">
    <property type="entry name" value="Ankyrin_rpt"/>
</dbReference>
<dbReference type="InterPro" id="IPR036770">
    <property type="entry name" value="Ankyrin_rpt-contain_sf"/>
</dbReference>
<dbReference type="InterPro" id="IPR001594">
    <property type="entry name" value="Palmitoyltrfase_DHHC"/>
</dbReference>
<dbReference type="PANTHER" id="PTHR24161">
    <property type="entry name" value="ANK_REP_REGION DOMAIN-CONTAINING PROTEIN-RELATED"/>
    <property type="match status" value="1"/>
</dbReference>
<dbReference type="PANTHER" id="PTHR24161:SF85">
    <property type="entry name" value="PALMITOYLTRANSFERASE HIP14"/>
    <property type="match status" value="1"/>
</dbReference>
<dbReference type="Pfam" id="PF12796">
    <property type="entry name" value="Ank_2"/>
    <property type="match status" value="2"/>
</dbReference>
<dbReference type="Pfam" id="PF01529">
    <property type="entry name" value="DHHC"/>
    <property type="match status" value="1"/>
</dbReference>
<dbReference type="SMART" id="SM00248">
    <property type="entry name" value="ANK"/>
    <property type="match status" value="6"/>
</dbReference>
<dbReference type="SUPFAM" id="SSF48403">
    <property type="entry name" value="Ankyrin repeat"/>
    <property type="match status" value="1"/>
</dbReference>
<dbReference type="PROSITE" id="PS50297">
    <property type="entry name" value="ANK_REP_REGION"/>
    <property type="match status" value="1"/>
</dbReference>
<dbReference type="PROSITE" id="PS50088">
    <property type="entry name" value="ANK_REPEAT"/>
    <property type="match status" value="3"/>
</dbReference>
<dbReference type="PROSITE" id="PS50216">
    <property type="entry name" value="DHHC"/>
    <property type="match status" value="1"/>
</dbReference>
<accession>Q875M2</accession>
<accession>Q6CMY6</accession>
<name>AKR1_KLULA</name>
<sequence length="752" mass="84940">MTAEEVDKESDPAIEDVKSDYDAIELGNENENENEVVSLDSMKAVISRASSELKHENDQGEERDLGSVEKDPILERYHAACKQGDMKTLREMVESKVIDLSNDYDPKERVSGLHWACINNRLSAVKYLAGAGAEVNFKGGELDATPLHWASKSGLVYIVDELLKAGADPNITDSQGYNLLHTSVFSSNIMLVIYVLFFVVDGKEDVDQPDPHQRTALQWATYQADALTVENLLKFNADVKNADDAGFTALHWGTVKGSIPVMDLLIKHGSDFFQTTNDGKNCFTIGKELYSIGSLEASLYKNGFDKNGFPLPQYFSASTGKMLTFFLPWVLIPLVFYIFSKITFFIALLINTIVLVISGLVLSRLVVPSYLLSKRHPILNSPLLAGILSGTIAIAFFIWFTKISILTFTEKPVGNIIMLGFFIGLITLFIGLMKSDPGYIPGTVDHDKVRETIKELLSLGKFDAKHFCVHTWIRIPLRSKYDRDSACLISAFDHFCPWVYNQIGLLNHKLFYMFVVLLEISVWWFLPLMMEYFDELEDYLENRKGKHFGDCHFLGDEDLCFGLHHDTFNFLLLCWVIFQAFWVLCLIAVQTVQMLKGVTDYEFVQINKKLKSNGTTTEDIFSSTPPELMSEELIAELDAPALDPRQVPQRTCFTVCCTLLGLDKLVTMIKSVLRLKSDEPSSRSSHLSALARIPTDYGWKQNLKDFWLLPDTSSPLWRRILLPPKDSHALLNGMEVDYYTLYTLPNATEELV</sequence>
<keyword id="KW-0012">Acyltransferase</keyword>
<keyword id="KW-0040">ANK repeat</keyword>
<keyword id="KW-0967">Endosome</keyword>
<keyword id="KW-0333">Golgi apparatus</keyword>
<keyword id="KW-0449">Lipoprotein</keyword>
<keyword id="KW-0472">Membrane</keyword>
<keyword id="KW-0564">Palmitate</keyword>
<keyword id="KW-1185">Reference proteome</keyword>
<keyword id="KW-0677">Repeat</keyword>
<keyword id="KW-0808">Transferase</keyword>
<keyword id="KW-0812">Transmembrane</keyword>
<keyword id="KW-1133">Transmembrane helix</keyword>
<gene>
    <name type="primary">AKR1</name>
    <name type="ordered locus">KLLA0E16764g</name>
</gene>